<proteinExistence type="inferred from homology"/>
<organism>
    <name type="scientific">Mycobacterium sp. (strain JLS)</name>
    <dbReference type="NCBI Taxonomy" id="164757"/>
    <lineage>
        <taxon>Bacteria</taxon>
        <taxon>Bacillati</taxon>
        <taxon>Actinomycetota</taxon>
        <taxon>Actinomycetes</taxon>
        <taxon>Mycobacteriales</taxon>
        <taxon>Mycobacteriaceae</taxon>
        <taxon>Mycobacterium</taxon>
    </lineage>
</organism>
<protein>
    <recommendedName>
        <fullName evidence="1">Protein translocase subunit SecA 1</fullName>
        <ecNumber evidence="1">7.4.2.8</ecNumber>
    </recommendedName>
</protein>
<dbReference type="EC" id="7.4.2.8" evidence="1"/>
<dbReference type="EMBL" id="CP000580">
    <property type="protein sequence ID" value="ABN97189.1"/>
    <property type="molecule type" value="Genomic_DNA"/>
</dbReference>
<dbReference type="SMR" id="A3PWB2"/>
<dbReference type="KEGG" id="mjl:Mjls_1387"/>
<dbReference type="HOGENOM" id="CLU_005314_3_0_11"/>
<dbReference type="BioCyc" id="MSP164757:G1G8C-1402-MONOMER"/>
<dbReference type="GO" id="GO:0031522">
    <property type="term" value="C:cell envelope Sec protein transport complex"/>
    <property type="evidence" value="ECO:0007669"/>
    <property type="project" value="TreeGrafter"/>
</dbReference>
<dbReference type="GO" id="GO:0005829">
    <property type="term" value="C:cytosol"/>
    <property type="evidence" value="ECO:0007669"/>
    <property type="project" value="TreeGrafter"/>
</dbReference>
<dbReference type="GO" id="GO:0005886">
    <property type="term" value="C:plasma membrane"/>
    <property type="evidence" value="ECO:0007669"/>
    <property type="project" value="UniProtKB-SubCell"/>
</dbReference>
<dbReference type="GO" id="GO:0005524">
    <property type="term" value="F:ATP binding"/>
    <property type="evidence" value="ECO:0007669"/>
    <property type="project" value="UniProtKB-UniRule"/>
</dbReference>
<dbReference type="GO" id="GO:0008564">
    <property type="term" value="F:protein-exporting ATPase activity"/>
    <property type="evidence" value="ECO:0007669"/>
    <property type="project" value="UniProtKB-EC"/>
</dbReference>
<dbReference type="GO" id="GO:0065002">
    <property type="term" value="P:intracellular protein transmembrane transport"/>
    <property type="evidence" value="ECO:0007669"/>
    <property type="project" value="UniProtKB-UniRule"/>
</dbReference>
<dbReference type="GO" id="GO:0017038">
    <property type="term" value="P:protein import"/>
    <property type="evidence" value="ECO:0007669"/>
    <property type="project" value="InterPro"/>
</dbReference>
<dbReference type="GO" id="GO:0006605">
    <property type="term" value="P:protein targeting"/>
    <property type="evidence" value="ECO:0007669"/>
    <property type="project" value="UniProtKB-UniRule"/>
</dbReference>
<dbReference type="GO" id="GO:0043952">
    <property type="term" value="P:protein transport by the Sec complex"/>
    <property type="evidence" value="ECO:0007669"/>
    <property type="project" value="TreeGrafter"/>
</dbReference>
<dbReference type="CDD" id="cd17928">
    <property type="entry name" value="DEXDc_SecA"/>
    <property type="match status" value="1"/>
</dbReference>
<dbReference type="CDD" id="cd18803">
    <property type="entry name" value="SF2_C_secA"/>
    <property type="match status" value="1"/>
</dbReference>
<dbReference type="FunFam" id="1.10.3060.10:FF:000002">
    <property type="entry name" value="Preprotein translocase subunit SecA"/>
    <property type="match status" value="1"/>
</dbReference>
<dbReference type="FunFam" id="3.40.50.300:FF:000113">
    <property type="entry name" value="Preprotein translocase subunit SecA"/>
    <property type="match status" value="1"/>
</dbReference>
<dbReference type="FunFam" id="3.40.50.300:FF:000334">
    <property type="entry name" value="Protein translocase subunit SecA"/>
    <property type="match status" value="1"/>
</dbReference>
<dbReference type="FunFam" id="3.90.1440.10:FF:000002">
    <property type="entry name" value="Protein translocase subunit SecA"/>
    <property type="match status" value="1"/>
</dbReference>
<dbReference type="Gene3D" id="1.10.3060.10">
    <property type="entry name" value="Helical scaffold and wing domains of SecA"/>
    <property type="match status" value="1"/>
</dbReference>
<dbReference type="Gene3D" id="3.40.50.300">
    <property type="entry name" value="P-loop containing nucleotide triphosphate hydrolases"/>
    <property type="match status" value="2"/>
</dbReference>
<dbReference type="Gene3D" id="3.90.1440.10">
    <property type="entry name" value="SecA, preprotein cross-linking domain"/>
    <property type="match status" value="1"/>
</dbReference>
<dbReference type="HAMAP" id="MF_01382">
    <property type="entry name" value="SecA"/>
    <property type="match status" value="1"/>
</dbReference>
<dbReference type="InterPro" id="IPR014001">
    <property type="entry name" value="Helicase_ATP-bd"/>
</dbReference>
<dbReference type="InterPro" id="IPR001650">
    <property type="entry name" value="Helicase_C-like"/>
</dbReference>
<dbReference type="InterPro" id="IPR027417">
    <property type="entry name" value="P-loop_NTPase"/>
</dbReference>
<dbReference type="InterPro" id="IPR000185">
    <property type="entry name" value="SecA"/>
</dbReference>
<dbReference type="InterPro" id="IPR020937">
    <property type="entry name" value="SecA_CS"/>
</dbReference>
<dbReference type="InterPro" id="IPR011115">
    <property type="entry name" value="SecA_DEAD"/>
</dbReference>
<dbReference type="InterPro" id="IPR014018">
    <property type="entry name" value="SecA_motor_DEAD"/>
</dbReference>
<dbReference type="InterPro" id="IPR011130">
    <property type="entry name" value="SecA_preprotein_X-link_dom"/>
</dbReference>
<dbReference type="InterPro" id="IPR044722">
    <property type="entry name" value="SecA_SF2_C"/>
</dbReference>
<dbReference type="InterPro" id="IPR011116">
    <property type="entry name" value="SecA_Wing/Scaffold"/>
</dbReference>
<dbReference type="InterPro" id="IPR036266">
    <property type="entry name" value="SecA_Wing/Scaffold_sf"/>
</dbReference>
<dbReference type="InterPro" id="IPR036670">
    <property type="entry name" value="SecA_X-link_sf"/>
</dbReference>
<dbReference type="NCBIfam" id="NF009538">
    <property type="entry name" value="PRK12904.1"/>
    <property type="match status" value="1"/>
</dbReference>
<dbReference type="NCBIfam" id="TIGR00963">
    <property type="entry name" value="secA"/>
    <property type="match status" value="1"/>
</dbReference>
<dbReference type="PANTHER" id="PTHR30612:SF0">
    <property type="entry name" value="CHLOROPLAST PROTEIN-TRANSPORTING ATPASE"/>
    <property type="match status" value="1"/>
</dbReference>
<dbReference type="PANTHER" id="PTHR30612">
    <property type="entry name" value="SECA INNER MEMBRANE COMPONENT OF SEC PROTEIN SECRETION SYSTEM"/>
    <property type="match status" value="1"/>
</dbReference>
<dbReference type="Pfam" id="PF21090">
    <property type="entry name" value="P-loop_SecA"/>
    <property type="match status" value="1"/>
</dbReference>
<dbReference type="Pfam" id="PF07517">
    <property type="entry name" value="SecA_DEAD"/>
    <property type="match status" value="1"/>
</dbReference>
<dbReference type="Pfam" id="PF01043">
    <property type="entry name" value="SecA_PP_bind"/>
    <property type="match status" value="1"/>
</dbReference>
<dbReference type="Pfam" id="PF07516">
    <property type="entry name" value="SecA_SW"/>
    <property type="match status" value="1"/>
</dbReference>
<dbReference type="PRINTS" id="PR00906">
    <property type="entry name" value="SECA"/>
</dbReference>
<dbReference type="SMART" id="SM00957">
    <property type="entry name" value="SecA_DEAD"/>
    <property type="match status" value="1"/>
</dbReference>
<dbReference type="SMART" id="SM00958">
    <property type="entry name" value="SecA_PP_bind"/>
    <property type="match status" value="1"/>
</dbReference>
<dbReference type="SUPFAM" id="SSF81886">
    <property type="entry name" value="Helical scaffold and wing domains of SecA"/>
    <property type="match status" value="1"/>
</dbReference>
<dbReference type="SUPFAM" id="SSF52540">
    <property type="entry name" value="P-loop containing nucleoside triphosphate hydrolases"/>
    <property type="match status" value="2"/>
</dbReference>
<dbReference type="SUPFAM" id="SSF81767">
    <property type="entry name" value="Pre-protein crosslinking domain of SecA"/>
    <property type="match status" value="1"/>
</dbReference>
<dbReference type="PROSITE" id="PS01312">
    <property type="entry name" value="SECA"/>
    <property type="match status" value="1"/>
</dbReference>
<dbReference type="PROSITE" id="PS51196">
    <property type="entry name" value="SECA_MOTOR_DEAD"/>
    <property type="match status" value="1"/>
</dbReference>
<accession>A3PWB2</accession>
<name>SECA1_MYCSJ</name>
<gene>
    <name evidence="1" type="primary">secA1</name>
    <name type="ordered locus">Mjls_1387</name>
</gene>
<keyword id="KW-0067">ATP-binding</keyword>
<keyword id="KW-1003">Cell membrane</keyword>
<keyword id="KW-0963">Cytoplasm</keyword>
<keyword id="KW-0472">Membrane</keyword>
<keyword id="KW-0547">Nucleotide-binding</keyword>
<keyword id="KW-0653">Protein transport</keyword>
<keyword id="KW-1278">Translocase</keyword>
<keyword id="KW-0811">Translocation</keyword>
<keyword id="KW-0813">Transport</keyword>
<evidence type="ECO:0000255" key="1">
    <source>
        <dbReference type="HAMAP-Rule" id="MF_01382"/>
    </source>
</evidence>
<evidence type="ECO:0000256" key="2">
    <source>
        <dbReference type="SAM" id="MobiDB-lite"/>
    </source>
</evidence>
<sequence>MLDKLLRLGEGRMVKRLKKVADYVNTLSDDVEKLSDAELRAKTDEFRKRIDGGEDLDDLLPEAFAVAREAAWRVLSQRHFDVQVMGGAALHFGNVAEMKTGEGKTLTCVLPAYLNALSGKGVHVVTVNDYLAKRDAEWMGRVHRFLGLDVGVILSGLTPDERRAAYHADITYGTNNEFGFDYLRDNMAHRLEDRVQRGHNFAVVDEVDSILIDEARTPLIISGPADAASNWYSEFARLAPLMEKDVHYEVDLRKRTVGVHEVGVEFVEDQLGIENLYEAANSPLVSYLNNALKAKELFQRDKDYIVRNGEVLIVDEFTGRVLLGRRYNEGMHQAIEAKEHVEIKAENQTLATITLQNYFRLYDKLAGMTGTAQTEAAELHEIYKLGVVPIPTNRDMIRQDQTDLIYKTEEAKFIAVVDDVYERYEKGQPVLIGTTSVERSEYLSKQFTKRKIPHNVLNAKYHEQEANIIAEAGRLGAITVATNMAGRGTDIVLGGNVDFLADKRLREQGLDPIETPEEYEAAWESTLNQIKAEAEEEADDVRAVGGLYVLGTERHESRRIDNQLRGRSGRQGDPGESRFYLSLGDELMRRFNGATLEALLTRLNLPDDVPIEAKMVTRAIKSAQTQVEQQNFEVRKNVLKYDEVMNQQRKVIYEERRRILEGEDLAEQAHKMLVDVVTAYVNGATAEGYAEDWDLEQLWTALKQLYPVGIDYHDLVDSDAVGEAGELTREELLDMLIKDAERAYAERERELEELAGEGAMRQLERNVLLNVIDRKWREHLYEMDYLKEGIGLRAMAQRDPLVEYQREGYDMFVGMLEALKEESVGFLFNVTVEAAPPAPSNRVAPVAAPPGLSEFAAAAAKAQEQTGQGAVATKERETPAPTLRAKGIDNDDTPPLTYVGPGEDGTAEVQRSNGGPRHAAPGGATRRERREAARKQAKTSKPTRRRG</sequence>
<feature type="chain" id="PRO_0000318384" description="Protein translocase subunit SecA 1">
    <location>
        <begin position="1"/>
        <end position="947"/>
    </location>
</feature>
<feature type="region of interest" description="Disordered" evidence="2">
    <location>
        <begin position="860"/>
        <end position="947"/>
    </location>
</feature>
<feature type="compositionally biased region" description="Basic and acidic residues" evidence="2">
    <location>
        <begin position="925"/>
        <end position="934"/>
    </location>
</feature>
<feature type="compositionally biased region" description="Basic residues" evidence="2">
    <location>
        <begin position="935"/>
        <end position="947"/>
    </location>
</feature>
<feature type="binding site" evidence="1">
    <location>
        <position position="83"/>
    </location>
    <ligand>
        <name>ATP</name>
        <dbReference type="ChEBI" id="CHEBI:30616"/>
    </ligand>
</feature>
<feature type="binding site" evidence="1">
    <location>
        <begin position="101"/>
        <end position="105"/>
    </location>
    <ligand>
        <name>ATP</name>
        <dbReference type="ChEBI" id="CHEBI:30616"/>
    </ligand>
</feature>
<feature type="binding site" evidence="1">
    <location>
        <position position="490"/>
    </location>
    <ligand>
        <name>ATP</name>
        <dbReference type="ChEBI" id="CHEBI:30616"/>
    </ligand>
</feature>
<reference key="1">
    <citation type="submission" date="2007-02" db="EMBL/GenBank/DDBJ databases">
        <title>Complete sequence of Mycobacterium sp. JLS.</title>
        <authorList>
            <consortium name="US DOE Joint Genome Institute"/>
            <person name="Copeland A."/>
            <person name="Lucas S."/>
            <person name="Lapidus A."/>
            <person name="Barry K."/>
            <person name="Detter J.C."/>
            <person name="Glavina del Rio T."/>
            <person name="Hammon N."/>
            <person name="Israni S."/>
            <person name="Dalin E."/>
            <person name="Tice H."/>
            <person name="Pitluck S."/>
            <person name="Chain P."/>
            <person name="Malfatti S."/>
            <person name="Shin M."/>
            <person name="Vergez L."/>
            <person name="Schmutz J."/>
            <person name="Larimer F."/>
            <person name="Land M."/>
            <person name="Hauser L."/>
            <person name="Kyrpides N."/>
            <person name="Mikhailova N."/>
            <person name="Miller C.D."/>
            <person name="Anderson A.J."/>
            <person name="Sims R.C."/>
            <person name="Richardson P."/>
        </authorList>
    </citation>
    <scope>NUCLEOTIDE SEQUENCE [LARGE SCALE GENOMIC DNA]</scope>
    <source>
        <strain>JLS</strain>
    </source>
</reference>
<comment type="function">
    <text evidence="1">Part of the Sec protein translocase complex. Interacts with the SecYEG preprotein conducting channel. Has a central role in coupling the hydrolysis of ATP to the transfer of proteins into and across the cell membrane, serving as an ATP-driven molecular motor driving the stepwise translocation of polypeptide chains across the membrane.</text>
</comment>
<comment type="catalytic activity">
    <reaction evidence="1">
        <text>ATP + H2O + cellular proteinSide 1 = ADP + phosphate + cellular proteinSide 2.</text>
        <dbReference type="EC" id="7.4.2.8"/>
    </reaction>
</comment>
<comment type="subunit">
    <text evidence="1">Monomer and homodimer. Part of the essential Sec protein translocation apparatus which comprises SecA, SecYEG and auxiliary proteins SecDF. Other proteins may also be involved.</text>
</comment>
<comment type="subcellular location">
    <subcellularLocation>
        <location evidence="1">Cell membrane</location>
        <topology evidence="1">Peripheral membrane protein</topology>
        <orientation evidence="1">Cytoplasmic side</orientation>
    </subcellularLocation>
    <subcellularLocation>
        <location evidence="1">Cytoplasm</location>
    </subcellularLocation>
    <text evidence="1">Distribution is 50-50.</text>
</comment>
<comment type="similarity">
    <text evidence="1">Belongs to the SecA family.</text>
</comment>